<organism>
    <name type="scientific">Mycobacterium tuberculosis (strain ATCC 25618 / H37Rv)</name>
    <dbReference type="NCBI Taxonomy" id="83332"/>
    <lineage>
        <taxon>Bacteria</taxon>
        <taxon>Bacillati</taxon>
        <taxon>Actinomycetota</taxon>
        <taxon>Actinomycetes</taxon>
        <taxon>Mycobacteriales</taxon>
        <taxon>Mycobacteriaceae</taxon>
        <taxon>Mycobacterium</taxon>
        <taxon>Mycobacterium tuberculosis complex</taxon>
    </lineage>
</organism>
<protein>
    <recommendedName>
        <fullName evidence="5">Diaminopimelate epimerase</fullName>
        <shortName evidence="5">DAP epimerase</shortName>
        <ecNumber evidence="2 3">5.1.1.7</ecNumber>
    </recommendedName>
    <alternativeName>
        <fullName evidence="1">PLP-independent amino acid racemase</fullName>
    </alternativeName>
</protein>
<comment type="function">
    <text evidence="2 3">Catalyzes the stereoinversion of LL-2,6-diaminopimelate (L,L-DAP) to meso-diaminopimelate (meso-DAP), a precursor of L-lysine and an essential component of the bacterial peptidoglycan.</text>
</comment>
<comment type="catalytic activity">
    <reaction evidence="2 3">
        <text>(2S,6S)-2,6-diaminopimelate = meso-2,6-diaminopimelate</text>
        <dbReference type="Rhea" id="RHEA:15393"/>
        <dbReference type="ChEBI" id="CHEBI:57609"/>
        <dbReference type="ChEBI" id="CHEBI:57791"/>
        <dbReference type="EC" id="5.1.1.7"/>
    </reaction>
</comment>
<comment type="activity regulation">
    <text evidence="3">Inhibited by sulphydryl alkylating agents, 2-nitro-5-thiocyanatobenzoate (NTCB), 5,50-dithiobis(2-nitrobenzoic acid) (DTNB) and 1,2-benzisothiazolidine 3-one (BIT) at nanomolar concentrations.</text>
</comment>
<comment type="biophysicochemical properties">
    <kinetics>
        <KM evidence="3">165.93 uM for meso-DAP (at pH 7.5 and at 30 degrees Celsius)</KM>
        <KM evidence="2">1217 uM for meso-DAP (at pH 7.5 and at 30 degrees Celsius)</KM>
        <text evidence="3">kcat is 0.1465 sec(-1) for epimerase activity.</text>
    </kinetics>
    <phDependence>
        <text evidence="2">Optimum pH is 7.5.</text>
    </phDependence>
    <temperatureDependence>
        <text evidence="2">DapF is almost 50% more active at 30 degrees Celsius than at 25 degrees Celsius. At 37 degrees Celsius the activity is slightly less than at 30 degrees Celsius.</text>
    </temperatureDependence>
</comment>
<comment type="pathway">
    <text evidence="6">Amino-acid biosynthesis; L-lysine biosynthesis via DAP pathway; DL-2,6-diaminopimelate from LL-2,6-diaminopimelate: step 1/1.</text>
</comment>
<comment type="subcellular location">
    <subcellularLocation>
        <location evidence="6">Cytoplasm</location>
    </subcellularLocation>
</comment>
<comment type="miscellaneous">
    <text evidence="4">Was identified as a high-confidence drug target.</text>
</comment>
<comment type="similarity">
    <text evidence="6">Belongs to the diaminopimelate epimerase family.</text>
</comment>
<accession>P9WP19</accession>
<accession>L0TC29</accession>
<accession>O33231</accession>
<accession>P63897</accession>
<feature type="chain" id="PRO_0000149853" description="Diaminopimelate epimerase">
    <location>
        <begin position="1"/>
        <end position="289"/>
    </location>
</feature>
<feature type="active site" description="Proton donor" evidence="3 7">
    <location>
        <position position="87"/>
    </location>
</feature>
<feature type="active site" description="Proton acceptor" evidence="3 7">
    <location>
        <position position="226"/>
    </location>
</feature>
<feature type="binding site" evidence="1">
    <location>
        <position position="11"/>
    </location>
    <ligand>
        <name>substrate</name>
    </ligand>
</feature>
<feature type="binding site" evidence="1">
    <location>
        <position position="78"/>
    </location>
    <ligand>
        <name>substrate</name>
    </ligand>
</feature>
<feature type="binding site" evidence="1">
    <location>
        <begin position="88"/>
        <end position="89"/>
    </location>
    <ligand>
        <name>substrate</name>
    </ligand>
</feature>
<feature type="binding site" evidence="1">
    <location>
        <position position="163"/>
    </location>
    <ligand>
        <name>substrate</name>
    </ligand>
</feature>
<feature type="binding site" evidence="1">
    <location>
        <position position="199"/>
    </location>
    <ligand>
        <name>substrate</name>
    </ligand>
</feature>
<feature type="binding site" evidence="1">
    <location>
        <begin position="217"/>
        <end position="218"/>
    </location>
    <ligand>
        <name>substrate</name>
    </ligand>
</feature>
<feature type="binding site" evidence="1">
    <location>
        <begin position="227"/>
        <end position="228"/>
    </location>
    <ligand>
        <name>substrate</name>
    </ligand>
</feature>
<feature type="site" description="Could be important to modulate the pK values of the two catalytic cysteine residues" evidence="1">
    <location>
        <position position="165"/>
    </location>
</feature>
<feature type="site" description="Could be important to modulate the pK values of the two catalytic cysteine residues" evidence="1">
    <location>
        <position position="217"/>
    </location>
</feature>
<feature type="mutagenesis site" description="Completely abolishes the diaminopimelate epimerase activity." evidence="3">
    <original>C</original>
    <variation>A</variation>
    <location>
        <position position="87"/>
    </location>
</feature>
<feature type="mutagenesis site" description="Strongly reduces the diaminopimelate epimerase activity." evidence="3">
    <original>C</original>
    <variation>S</variation>
    <location>
        <position position="87"/>
    </location>
</feature>
<feature type="mutagenesis site" description="Completely abolishes the diaminopimelate epimerase activity." evidence="3">
    <original>C</original>
    <variation>A</variation>
    <location>
        <position position="226"/>
    </location>
</feature>
<feature type="mutagenesis site" description="Strongly reduces the diaminopimelate epimerase activity." evidence="3">
    <original>C</original>
    <variation>S</variation>
    <location>
        <position position="226"/>
    </location>
</feature>
<feature type="strand" evidence="8">
    <location>
        <begin position="1"/>
        <end position="10"/>
    </location>
</feature>
<feature type="strand" evidence="8">
    <location>
        <begin position="12"/>
        <end position="17"/>
    </location>
</feature>
<feature type="helix" evidence="8">
    <location>
        <begin position="27"/>
        <end position="34"/>
    </location>
</feature>
<feature type="turn" evidence="8">
    <location>
        <begin position="36"/>
        <end position="38"/>
    </location>
</feature>
<feature type="strand" evidence="8">
    <location>
        <begin position="43"/>
        <end position="50"/>
    </location>
</feature>
<feature type="helix" evidence="8">
    <location>
        <begin position="51"/>
        <end position="56"/>
    </location>
</feature>
<feature type="strand" evidence="8">
    <location>
        <begin position="71"/>
        <end position="78"/>
    </location>
</feature>
<feature type="helix" evidence="8">
    <location>
        <begin position="91"/>
        <end position="100"/>
    </location>
</feature>
<feature type="strand" evidence="8">
    <location>
        <begin position="107"/>
        <end position="112"/>
    </location>
</feature>
<feature type="strand" evidence="8">
    <location>
        <begin position="118"/>
        <end position="125"/>
    </location>
</feature>
<feature type="strand" evidence="8">
    <location>
        <begin position="127"/>
        <end position="135"/>
    </location>
</feature>
<feature type="strand" evidence="8">
    <location>
        <begin position="140"/>
        <end position="147"/>
    </location>
</feature>
<feature type="strand" evidence="8">
    <location>
        <begin position="155"/>
        <end position="170"/>
    </location>
</feature>
<feature type="turn" evidence="8">
    <location>
        <begin position="175"/>
        <end position="178"/>
    </location>
</feature>
<feature type="turn" evidence="8">
    <location>
        <begin position="191"/>
        <end position="193"/>
    </location>
</feature>
<feature type="strand" evidence="8">
    <location>
        <begin position="199"/>
        <end position="204"/>
    </location>
</feature>
<feature type="strand" evidence="8">
    <location>
        <begin position="210"/>
        <end position="217"/>
    </location>
</feature>
<feature type="turn" evidence="8">
    <location>
        <begin position="218"/>
        <end position="220"/>
    </location>
</feature>
<feature type="helix" evidence="8">
    <location>
        <begin position="227"/>
        <end position="240"/>
    </location>
</feature>
<feature type="strand" evidence="8">
    <location>
        <begin position="244"/>
        <end position="252"/>
    </location>
</feature>
<feature type="strand" evidence="8">
    <location>
        <begin position="255"/>
        <end position="261"/>
    </location>
</feature>
<feature type="strand" evidence="8">
    <location>
        <begin position="266"/>
        <end position="280"/>
    </location>
</feature>
<feature type="helix" evidence="8">
    <location>
        <begin position="282"/>
        <end position="286"/>
    </location>
</feature>
<reference key="1">
    <citation type="journal article" date="1998" name="Nature">
        <title>Deciphering the biology of Mycobacterium tuberculosis from the complete genome sequence.</title>
        <authorList>
            <person name="Cole S.T."/>
            <person name="Brosch R."/>
            <person name="Parkhill J."/>
            <person name="Garnier T."/>
            <person name="Churcher C.M."/>
            <person name="Harris D.E."/>
            <person name="Gordon S.V."/>
            <person name="Eiglmeier K."/>
            <person name="Gas S."/>
            <person name="Barry C.E. III"/>
            <person name="Tekaia F."/>
            <person name="Badcock K."/>
            <person name="Basham D."/>
            <person name="Brown D."/>
            <person name="Chillingworth T."/>
            <person name="Connor R."/>
            <person name="Davies R.M."/>
            <person name="Devlin K."/>
            <person name="Feltwell T."/>
            <person name="Gentles S."/>
            <person name="Hamlin N."/>
            <person name="Holroyd S."/>
            <person name="Hornsby T."/>
            <person name="Jagels K."/>
            <person name="Krogh A."/>
            <person name="McLean J."/>
            <person name="Moule S."/>
            <person name="Murphy L.D."/>
            <person name="Oliver S."/>
            <person name="Osborne J."/>
            <person name="Quail M.A."/>
            <person name="Rajandream M.A."/>
            <person name="Rogers J."/>
            <person name="Rutter S."/>
            <person name="Seeger K."/>
            <person name="Skelton S."/>
            <person name="Squares S."/>
            <person name="Squares R."/>
            <person name="Sulston J.E."/>
            <person name="Taylor K."/>
            <person name="Whitehead S."/>
            <person name="Barrell B.G."/>
        </authorList>
    </citation>
    <scope>NUCLEOTIDE SEQUENCE [LARGE SCALE GENOMIC DNA]</scope>
    <source>
        <strain>ATCC 25618 / H37Rv</strain>
    </source>
</reference>
<reference key="2">
    <citation type="journal article" date="2008" name="BMC Syst. Biol.">
        <title>targetTB: a target identification pipeline for Mycobacterium tuberculosis through an interactome, reactome and genome-scale structural analysis.</title>
        <authorList>
            <person name="Raman K."/>
            <person name="Yeturu K."/>
            <person name="Chandra N."/>
        </authorList>
    </citation>
    <scope>IDENTIFICATION AS A DRUG TARGET [LARGE SCALE ANALYSIS]</scope>
</reference>
<reference key="3">
    <citation type="journal article" date="2006" name="FEMS Microbiol. Lett.">
        <title>Use of a codon alteration strategy in a novel approach to cloning the Mycobacterium tuberculosis diaminopimelic acid epimerase.</title>
        <authorList>
            <person name="Usha V."/>
            <person name="Dover L.G."/>
            <person name="Roper D.L."/>
            <person name="Lloyd A.J."/>
            <person name="Besra G.S."/>
        </authorList>
    </citation>
    <scope>FUNCTION</scope>
    <scope>CATALYTIC ACTIVITY</scope>
    <scope>BIOPHYSICOCHEMICAL PROPERTIES</scope>
</reference>
<reference key="4">
    <citation type="journal article" date="2008" name="FEMS Microbiol. Lett.">
        <title>Characterization of Mycobacterium tuberculosis diaminopimelic acid epimerase: paired cysteine residues are crucial for racemization.</title>
        <authorList>
            <person name="Usha V."/>
            <person name="Dover L.G."/>
            <person name="Roper D.L."/>
            <person name="Besra G.S."/>
        </authorList>
    </citation>
    <scope>FUNCTION</scope>
    <scope>CATALYTIC ACTIVITY</scope>
    <scope>MUTAGENESIS OF CYS-87 AND CYS-226</scope>
    <scope>BIOPHYSICOCHEMICAL PROPERTIES</scope>
    <scope>ACTIVE SITE</scope>
    <scope>ACTIVITY REGULATION</scope>
</reference>
<reference key="5">
    <citation type="journal article" date="2011" name="Mol. Cell. Proteomics">
        <title>Proteogenomic analysis of Mycobacterium tuberculosis by high resolution mass spectrometry.</title>
        <authorList>
            <person name="Kelkar D.S."/>
            <person name="Kumar D."/>
            <person name="Kumar P."/>
            <person name="Balakrishnan L."/>
            <person name="Muthusamy B."/>
            <person name="Yadav A.K."/>
            <person name="Shrivastava P."/>
            <person name="Marimuthu A."/>
            <person name="Anand S."/>
            <person name="Sundaram H."/>
            <person name="Kingsbury R."/>
            <person name="Harsha H.C."/>
            <person name="Nair B."/>
            <person name="Prasad T.S."/>
            <person name="Chauhan D.S."/>
            <person name="Katoch K."/>
            <person name="Katoch V.M."/>
            <person name="Kumar P."/>
            <person name="Chaerkady R."/>
            <person name="Ramachandran S."/>
            <person name="Dash D."/>
            <person name="Pandey A."/>
        </authorList>
    </citation>
    <scope>IDENTIFICATION BY MASS SPECTROMETRY [LARGE SCALE ANALYSIS]</scope>
    <source>
        <strain>ATCC 25618 / H37Rv</strain>
    </source>
</reference>
<reference key="6">
    <citation type="journal article" date="2009" name="Acta Crystallogr. D">
        <title>Structure of the diaminopimelate epimerase DapF from Mycobacterium tuberculosis.</title>
        <authorList>
            <person name="Usha V."/>
            <person name="Dover L.G."/>
            <person name="Roper D.I."/>
            <person name="Futterer K."/>
            <person name="Besra G.S."/>
        </authorList>
    </citation>
    <scope>X-RAY CRYSTALLOGRAPHY (2.6 ANGSTROMS)</scope>
    <scope>ACTIVE SITE</scope>
</reference>
<gene>
    <name evidence="5" type="primary">dapF</name>
    <name type="ordered locus">Rv2726c</name>
    <name type="ORF">MTCY154.06c</name>
</gene>
<proteinExistence type="evidence at protein level"/>
<evidence type="ECO:0000255" key="1">
    <source>
        <dbReference type="HAMAP-Rule" id="MF_00197"/>
    </source>
</evidence>
<evidence type="ECO:0000269" key="2">
    <source>
    </source>
</evidence>
<evidence type="ECO:0000269" key="3">
    <source>
    </source>
</evidence>
<evidence type="ECO:0000269" key="4">
    <source>
    </source>
</evidence>
<evidence type="ECO:0000303" key="5">
    <source>
    </source>
</evidence>
<evidence type="ECO:0000305" key="6"/>
<evidence type="ECO:0000305" key="7">
    <source>
    </source>
</evidence>
<evidence type="ECO:0007829" key="8">
    <source>
        <dbReference type="PDB" id="3FVE"/>
    </source>
</evidence>
<dbReference type="EC" id="5.1.1.7" evidence="2 3"/>
<dbReference type="EMBL" id="AL123456">
    <property type="protein sequence ID" value="CCP45524.1"/>
    <property type="molecule type" value="Genomic_DNA"/>
</dbReference>
<dbReference type="PIR" id="E70505">
    <property type="entry name" value="E70505"/>
</dbReference>
<dbReference type="RefSeq" id="NP_217242.1">
    <property type="nucleotide sequence ID" value="NC_000962.3"/>
</dbReference>
<dbReference type="RefSeq" id="WP_003413987.1">
    <property type="nucleotide sequence ID" value="NZ_NVQJ01000017.1"/>
</dbReference>
<dbReference type="PDB" id="3FVE">
    <property type="method" value="X-ray"/>
    <property type="resolution" value="2.60 A"/>
    <property type="chains" value="A=1-289"/>
</dbReference>
<dbReference type="PDBsum" id="3FVE"/>
<dbReference type="SMR" id="P9WP19"/>
<dbReference type="FunCoup" id="P9WP19">
    <property type="interactions" value="367"/>
</dbReference>
<dbReference type="STRING" id="83332.Rv2726c"/>
<dbReference type="PaxDb" id="83332-Rv2726c"/>
<dbReference type="DNASU" id="888614"/>
<dbReference type="GeneID" id="45426713"/>
<dbReference type="GeneID" id="888614"/>
<dbReference type="KEGG" id="mtu:Rv2726c"/>
<dbReference type="KEGG" id="mtv:RVBD_2726c"/>
<dbReference type="TubercuList" id="Rv2726c"/>
<dbReference type="eggNOG" id="COG0253">
    <property type="taxonomic scope" value="Bacteria"/>
</dbReference>
<dbReference type="InParanoid" id="P9WP19"/>
<dbReference type="OrthoDB" id="9805408at2"/>
<dbReference type="PhylomeDB" id="P9WP19"/>
<dbReference type="BRENDA" id="5.1.1.7">
    <property type="organism ID" value="3445"/>
</dbReference>
<dbReference type="SABIO-RK" id="P9WP19"/>
<dbReference type="UniPathway" id="UPA00034">
    <property type="reaction ID" value="UER00025"/>
</dbReference>
<dbReference type="EvolutionaryTrace" id="P9WP19"/>
<dbReference type="Proteomes" id="UP000001584">
    <property type="component" value="Chromosome"/>
</dbReference>
<dbReference type="GO" id="GO:0005829">
    <property type="term" value="C:cytosol"/>
    <property type="evidence" value="ECO:0000318"/>
    <property type="project" value="GO_Central"/>
</dbReference>
<dbReference type="GO" id="GO:0005886">
    <property type="term" value="C:plasma membrane"/>
    <property type="evidence" value="ECO:0007005"/>
    <property type="project" value="MTBBASE"/>
</dbReference>
<dbReference type="GO" id="GO:0008837">
    <property type="term" value="F:diaminopimelate epimerase activity"/>
    <property type="evidence" value="ECO:0000314"/>
    <property type="project" value="MTBBASE"/>
</dbReference>
<dbReference type="GO" id="GO:0009089">
    <property type="term" value="P:lysine biosynthetic process via diaminopimelate"/>
    <property type="evidence" value="ECO:0000314"/>
    <property type="project" value="MTBBASE"/>
</dbReference>
<dbReference type="Gene3D" id="3.10.310.10">
    <property type="entry name" value="Diaminopimelate Epimerase, Chain A, domain 1"/>
    <property type="match status" value="2"/>
</dbReference>
<dbReference type="HAMAP" id="MF_00197">
    <property type="entry name" value="DAP_epimerase"/>
    <property type="match status" value="1"/>
</dbReference>
<dbReference type="InterPro" id="IPR018510">
    <property type="entry name" value="DAP_epimerase_AS"/>
</dbReference>
<dbReference type="InterPro" id="IPR001653">
    <property type="entry name" value="DAP_epimerase_DapF"/>
</dbReference>
<dbReference type="NCBIfam" id="TIGR00652">
    <property type="entry name" value="DapF"/>
    <property type="match status" value="1"/>
</dbReference>
<dbReference type="PANTHER" id="PTHR31689:SF0">
    <property type="entry name" value="DIAMINOPIMELATE EPIMERASE"/>
    <property type="match status" value="1"/>
</dbReference>
<dbReference type="PANTHER" id="PTHR31689">
    <property type="entry name" value="DIAMINOPIMELATE EPIMERASE, CHLOROPLASTIC"/>
    <property type="match status" value="1"/>
</dbReference>
<dbReference type="Pfam" id="PF01678">
    <property type="entry name" value="DAP_epimerase"/>
    <property type="match status" value="2"/>
</dbReference>
<dbReference type="SUPFAM" id="SSF54506">
    <property type="entry name" value="Diaminopimelate epimerase-like"/>
    <property type="match status" value="2"/>
</dbReference>
<dbReference type="PROSITE" id="PS01326">
    <property type="entry name" value="DAP_EPIMERASE"/>
    <property type="match status" value="1"/>
</dbReference>
<name>DAPF_MYCTU</name>
<sequence>MIFAKGHGTQNDFVLLPDVDAELVLTAARVAALCDRRKGLGADGVLRVTTAGAAQAVGVLDSLPEGVRVTDWYMDYRNADGSAAQMCGNGVRVFAHYLRASGLEVRDEFVVGSLAGPRPVTCHHVEAAYADVSVDMGKANRLGAGEAVVGGRRFHGLAVDVGNPHLACVDSQLTVDGLAALDVGAPVSFDGAQFPDGVNVEVLTAPVDGAVWMRVHERGVGETRSCGTGTVAAAVAALAAVGSPTGTLTVHVPGGEVVVTVTDATSFLRGPSVLVARGDLADDWWNAMG</sequence>
<keyword id="KW-0002">3D-structure</keyword>
<keyword id="KW-0028">Amino-acid biosynthesis</keyword>
<keyword id="KW-0963">Cytoplasm</keyword>
<keyword id="KW-0413">Isomerase</keyword>
<keyword id="KW-0457">Lysine biosynthesis</keyword>
<keyword id="KW-1185">Reference proteome</keyword>